<reference key="1">
    <citation type="submission" date="2007-03" db="EMBL/GenBank/DDBJ databases">
        <title>Sequencing analysis of Lobularia maritima chloroplast DNA.</title>
        <authorList>
            <person name="Hosouchi T."/>
            <person name="Tsuruoka H."/>
            <person name="Kotani H."/>
        </authorList>
    </citation>
    <scope>NUCLEOTIDE SEQUENCE [LARGE SCALE GENOMIC DNA]</scope>
</reference>
<name>RBL_LOBMA</name>
<geneLocation type="chloroplast"/>
<comment type="function">
    <text evidence="2">RuBisCO catalyzes two reactions: the carboxylation of D-ribulose 1,5-bisphosphate, the primary event in carbon dioxide fixation, as well as the oxidative fragmentation of the pentose substrate in the photorespiration process. Both reactions occur simultaneously and in competition at the same active site.</text>
</comment>
<comment type="catalytic activity">
    <reaction evidence="2">
        <text>2 (2R)-3-phosphoglycerate + 2 H(+) = D-ribulose 1,5-bisphosphate + CO2 + H2O</text>
        <dbReference type="Rhea" id="RHEA:23124"/>
        <dbReference type="ChEBI" id="CHEBI:15377"/>
        <dbReference type="ChEBI" id="CHEBI:15378"/>
        <dbReference type="ChEBI" id="CHEBI:16526"/>
        <dbReference type="ChEBI" id="CHEBI:57870"/>
        <dbReference type="ChEBI" id="CHEBI:58272"/>
        <dbReference type="EC" id="4.1.1.39"/>
    </reaction>
</comment>
<comment type="catalytic activity">
    <reaction evidence="2">
        <text>D-ribulose 1,5-bisphosphate + O2 = 2-phosphoglycolate + (2R)-3-phosphoglycerate + 2 H(+)</text>
        <dbReference type="Rhea" id="RHEA:36631"/>
        <dbReference type="ChEBI" id="CHEBI:15378"/>
        <dbReference type="ChEBI" id="CHEBI:15379"/>
        <dbReference type="ChEBI" id="CHEBI:57870"/>
        <dbReference type="ChEBI" id="CHEBI:58033"/>
        <dbReference type="ChEBI" id="CHEBI:58272"/>
    </reaction>
</comment>
<comment type="cofactor">
    <cofactor evidence="2">
        <name>Mg(2+)</name>
        <dbReference type="ChEBI" id="CHEBI:18420"/>
    </cofactor>
    <text evidence="2">Binds 1 Mg(2+) ion per subunit.</text>
</comment>
<comment type="subunit">
    <text evidence="2">Heterohexadecamer of 8 large chains and 8 small chains; disulfide-linked. The disulfide link is formed within the large subunit homodimers.</text>
</comment>
<comment type="subcellular location">
    <subcellularLocation>
        <location>Plastid</location>
        <location>Chloroplast</location>
    </subcellularLocation>
</comment>
<comment type="PTM">
    <text evidence="2">The disulfide bond which can form in the large chain dimeric partners within the hexadecamer appears to be associated with oxidative stress and protein turnover.</text>
</comment>
<comment type="miscellaneous">
    <text evidence="2">The basic functional RuBisCO is composed of a large chain homodimer in a 'head-to-tail' conformation. In form I RuBisCO this homodimer is arranged in a barrel-like tetramer with the small subunits forming a tetrameric 'cap' on each end of the 'barrel'.</text>
</comment>
<comment type="similarity">
    <text evidence="2">Belongs to the RuBisCO large chain family. Type I subfamily.</text>
</comment>
<evidence type="ECO:0000250" key="1">
    <source>
        <dbReference type="UniProtKB" id="O03042"/>
    </source>
</evidence>
<evidence type="ECO:0000255" key="2">
    <source>
        <dbReference type="HAMAP-Rule" id="MF_01338"/>
    </source>
</evidence>
<sequence>MSPQTETKASVGFKAGVKEYKLTYYTPEYETKDTDILAAFRVTPQPGVPPEEAGAAVAAESSTGTWTTVWTDGLTSLDRYKGRCYHIEPVPGEETQFIAYVAYPLDLFEEGSVTNMFTSIVGNVFGFKALAALRLEDLRIPPAYTKTFQGPPHGIQVERDKLNKYGRPLLGCTIKPKLGLSAKNYGRAVYECLRGGLDFTKDDENVNSQPFMRWRDRFLFCAEAIYKSQAETGEIKGHYLNATAGTCEEMIKRAVFARELGVPIVMHDYLTGGFTANTSLAHYCRDNGLLLHIHRAMHAVIDRQKNHGMHFRVLAKALRLSGGDHIHAGTVVGKLEGDRESTLGFVDLLRDDYIEKDRSRGIFFTQDWVSLPGVLPVASGGIHVWHMPALTEIFGDDSVLQFGGGTLGHPWGNAPGAVANRVALEACVQARNEGRDLAVEGNEIVREACKWSPELAAACEVWKEIRFNFPTIDKLDGQE</sequence>
<protein>
    <recommendedName>
        <fullName evidence="2">Ribulose bisphosphate carboxylase large chain</fullName>
        <shortName evidence="2">RuBisCO large subunit</shortName>
        <ecNumber evidence="2">4.1.1.39</ecNumber>
    </recommendedName>
</protein>
<organism>
    <name type="scientific">Lobularia maritima</name>
    <name type="common">Sweet alyssum</name>
    <name type="synonym">Alyssum maritimum</name>
    <dbReference type="NCBI Taxonomy" id="226051"/>
    <lineage>
        <taxon>Eukaryota</taxon>
        <taxon>Viridiplantae</taxon>
        <taxon>Streptophyta</taxon>
        <taxon>Embryophyta</taxon>
        <taxon>Tracheophyta</taxon>
        <taxon>Spermatophyta</taxon>
        <taxon>Magnoliopsida</taxon>
        <taxon>eudicotyledons</taxon>
        <taxon>Gunneridae</taxon>
        <taxon>Pentapetalae</taxon>
        <taxon>rosids</taxon>
        <taxon>malvids</taxon>
        <taxon>Brassicales</taxon>
        <taxon>Brassicaceae</taxon>
        <taxon>Anastaticeae</taxon>
        <taxon>Lobularia</taxon>
    </lineage>
</organism>
<proteinExistence type="inferred from homology"/>
<accession>A4QLK2</accession>
<gene>
    <name evidence="2" type="primary">rbcL</name>
</gene>
<feature type="propeptide" id="PRO_0000300001" evidence="2">
    <location>
        <begin position="1"/>
        <end position="2"/>
    </location>
</feature>
<feature type="chain" id="PRO_0000300002" description="Ribulose bisphosphate carboxylase large chain">
    <location>
        <begin position="3"/>
        <end position="479"/>
    </location>
</feature>
<feature type="active site" description="Proton acceptor" evidence="2">
    <location>
        <position position="175"/>
    </location>
</feature>
<feature type="active site" description="Proton acceptor" evidence="2">
    <location>
        <position position="294"/>
    </location>
</feature>
<feature type="binding site" description="in homodimeric partner" evidence="2">
    <location>
        <position position="123"/>
    </location>
    <ligand>
        <name>substrate</name>
    </ligand>
</feature>
<feature type="binding site" evidence="2">
    <location>
        <position position="173"/>
    </location>
    <ligand>
        <name>substrate</name>
    </ligand>
</feature>
<feature type="binding site" evidence="2">
    <location>
        <position position="177"/>
    </location>
    <ligand>
        <name>substrate</name>
    </ligand>
</feature>
<feature type="binding site" description="via carbamate group" evidence="2">
    <location>
        <position position="201"/>
    </location>
    <ligand>
        <name>Mg(2+)</name>
        <dbReference type="ChEBI" id="CHEBI:18420"/>
    </ligand>
</feature>
<feature type="binding site" evidence="2">
    <location>
        <position position="203"/>
    </location>
    <ligand>
        <name>Mg(2+)</name>
        <dbReference type="ChEBI" id="CHEBI:18420"/>
    </ligand>
</feature>
<feature type="binding site" evidence="2">
    <location>
        <position position="204"/>
    </location>
    <ligand>
        <name>Mg(2+)</name>
        <dbReference type="ChEBI" id="CHEBI:18420"/>
    </ligand>
</feature>
<feature type="binding site" evidence="2">
    <location>
        <position position="295"/>
    </location>
    <ligand>
        <name>substrate</name>
    </ligand>
</feature>
<feature type="binding site" evidence="2">
    <location>
        <position position="327"/>
    </location>
    <ligand>
        <name>substrate</name>
    </ligand>
</feature>
<feature type="binding site" evidence="2">
    <location>
        <position position="379"/>
    </location>
    <ligand>
        <name>substrate</name>
    </ligand>
</feature>
<feature type="site" description="Transition state stabilizer" evidence="2">
    <location>
        <position position="334"/>
    </location>
</feature>
<feature type="modified residue" description="N6-carboxylysine" evidence="2">
    <location>
        <position position="201"/>
    </location>
</feature>
<feature type="modified residue" description="Phosphoserine" evidence="1">
    <location>
        <position position="208"/>
    </location>
</feature>
<feature type="modified residue" description="Phosphothreonine" evidence="1">
    <location>
        <position position="330"/>
    </location>
</feature>
<feature type="disulfide bond" description="Interchain; in linked form" evidence="2">
    <location>
        <position position="247"/>
    </location>
</feature>
<dbReference type="EC" id="4.1.1.39" evidence="2"/>
<dbReference type="EMBL" id="AP009375">
    <property type="protein sequence ID" value="BAF50557.1"/>
    <property type="molecule type" value="Genomic_DNA"/>
</dbReference>
<dbReference type="RefSeq" id="YP_001123733.1">
    <property type="nucleotide sequence ID" value="NC_009274.1"/>
</dbReference>
<dbReference type="SMR" id="A4QLK2"/>
<dbReference type="GeneID" id="4964891"/>
<dbReference type="GO" id="GO:0009507">
    <property type="term" value="C:chloroplast"/>
    <property type="evidence" value="ECO:0007669"/>
    <property type="project" value="UniProtKB-SubCell"/>
</dbReference>
<dbReference type="GO" id="GO:0000287">
    <property type="term" value="F:magnesium ion binding"/>
    <property type="evidence" value="ECO:0007669"/>
    <property type="project" value="UniProtKB-UniRule"/>
</dbReference>
<dbReference type="GO" id="GO:0004497">
    <property type="term" value="F:monooxygenase activity"/>
    <property type="evidence" value="ECO:0007669"/>
    <property type="project" value="UniProtKB-KW"/>
</dbReference>
<dbReference type="GO" id="GO:0016984">
    <property type="term" value="F:ribulose-bisphosphate carboxylase activity"/>
    <property type="evidence" value="ECO:0007669"/>
    <property type="project" value="UniProtKB-UniRule"/>
</dbReference>
<dbReference type="GO" id="GO:0009853">
    <property type="term" value="P:photorespiration"/>
    <property type="evidence" value="ECO:0007669"/>
    <property type="project" value="UniProtKB-KW"/>
</dbReference>
<dbReference type="GO" id="GO:0019253">
    <property type="term" value="P:reductive pentose-phosphate cycle"/>
    <property type="evidence" value="ECO:0007669"/>
    <property type="project" value="UniProtKB-UniRule"/>
</dbReference>
<dbReference type="CDD" id="cd08212">
    <property type="entry name" value="RuBisCO_large_I"/>
    <property type="match status" value="1"/>
</dbReference>
<dbReference type="FunFam" id="3.20.20.110:FF:000001">
    <property type="entry name" value="Ribulose bisphosphate carboxylase large chain"/>
    <property type="match status" value="1"/>
</dbReference>
<dbReference type="FunFam" id="3.30.70.150:FF:000001">
    <property type="entry name" value="Ribulose bisphosphate carboxylase large chain"/>
    <property type="match status" value="1"/>
</dbReference>
<dbReference type="Gene3D" id="3.20.20.110">
    <property type="entry name" value="Ribulose bisphosphate carboxylase, large subunit, C-terminal domain"/>
    <property type="match status" value="1"/>
</dbReference>
<dbReference type="Gene3D" id="3.30.70.150">
    <property type="entry name" value="RuBisCO large subunit, N-terminal domain"/>
    <property type="match status" value="1"/>
</dbReference>
<dbReference type="HAMAP" id="MF_01338">
    <property type="entry name" value="RuBisCO_L_type1"/>
    <property type="match status" value="1"/>
</dbReference>
<dbReference type="InterPro" id="IPR033966">
    <property type="entry name" value="RuBisCO"/>
</dbReference>
<dbReference type="InterPro" id="IPR020878">
    <property type="entry name" value="RuBisCo_large_chain_AS"/>
</dbReference>
<dbReference type="InterPro" id="IPR000685">
    <property type="entry name" value="RuBisCO_lsu_C"/>
</dbReference>
<dbReference type="InterPro" id="IPR036376">
    <property type="entry name" value="RuBisCO_lsu_C_sf"/>
</dbReference>
<dbReference type="InterPro" id="IPR017443">
    <property type="entry name" value="RuBisCO_lsu_fd_N"/>
</dbReference>
<dbReference type="InterPro" id="IPR036422">
    <property type="entry name" value="RuBisCO_lsu_N_sf"/>
</dbReference>
<dbReference type="InterPro" id="IPR020888">
    <property type="entry name" value="RuBisCO_lsuI"/>
</dbReference>
<dbReference type="NCBIfam" id="NF003252">
    <property type="entry name" value="PRK04208.1"/>
    <property type="match status" value="1"/>
</dbReference>
<dbReference type="PANTHER" id="PTHR42704">
    <property type="entry name" value="RIBULOSE BISPHOSPHATE CARBOXYLASE"/>
    <property type="match status" value="1"/>
</dbReference>
<dbReference type="PANTHER" id="PTHR42704:SF16">
    <property type="entry name" value="RIBULOSE BISPHOSPHATE CARBOXYLASE LARGE CHAIN"/>
    <property type="match status" value="1"/>
</dbReference>
<dbReference type="Pfam" id="PF00016">
    <property type="entry name" value="RuBisCO_large"/>
    <property type="match status" value="1"/>
</dbReference>
<dbReference type="Pfam" id="PF02788">
    <property type="entry name" value="RuBisCO_large_N"/>
    <property type="match status" value="1"/>
</dbReference>
<dbReference type="SFLD" id="SFLDG01052">
    <property type="entry name" value="RuBisCO"/>
    <property type="match status" value="1"/>
</dbReference>
<dbReference type="SFLD" id="SFLDS00014">
    <property type="entry name" value="RuBisCO"/>
    <property type="match status" value="1"/>
</dbReference>
<dbReference type="SFLD" id="SFLDG00301">
    <property type="entry name" value="RuBisCO-like_proteins"/>
    <property type="match status" value="1"/>
</dbReference>
<dbReference type="SUPFAM" id="SSF51649">
    <property type="entry name" value="RuBisCo, C-terminal domain"/>
    <property type="match status" value="1"/>
</dbReference>
<dbReference type="SUPFAM" id="SSF54966">
    <property type="entry name" value="RuBisCO, large subunit, small (N-terminal) domain"/>
    <property type="match status" value="1"/>
</dbReference>
<dbReference type="PROSITE" id="PS00157">
    <property type="entry name" value="RUBISCO_LARGE"/>
    <property type="match status" value="1"/>
</dbReference>
<keyword id="KW-0113">Calvin cycle</keyword>
<keyword id="KW-0120">Carbon dioxide fixation</keyword>
<keyword id="KW-0150">Chloroplast</keyword>
<keyword id="KW-1015">Disulfide bond</keyword>
<keyword id="KW-0456">Lyase</keyword>
<keyword id="KW-0460">Magnesium</keyword>
<keyword id="KW-0479">Metal-binding</keyword>
<keyword id="KW-0503">Monooxygenase</keyword>
<keyword id="KW-0560">Oxidoreductase</keyword>
<keyword id="KW-0597">Phosphoprotein</keyword>
<keyword id="KW-0601">Photorespiration</keyword>
<keyword id="KW-0602">Photosynthesis</keyword>
<keyword id="KW-0934">Plastid</keyword>